<proteinExistence type="evidence at protein level"/>
<sequence length="321" mass="36436">MASSDETIFDLPPYIRVFKDGRVERLHSSPYVPPSLNDPETGVSWKDVPISSKVSARIYLPKISDQQENEEKLPIFVYFHGAGFCLESAFRSFFHTFIKHFVSEAKAIGVSVEYRLAPEHPLPAAYEDCWEALQWVASHVRLDNSSLKRSMDKDPWIINYGDFDRLYLGGDSPGGNIVHNVLLRAGKEKLNGGVKILGAIQYYPYFLIRTSSKQSDYMENDYRCYWKLAYPNAPGGTDNPMINPTVENAPDLAGYGCSRLLISMVADETRDITLLFIEALKKSGWKGQLDVADFEAEFFDLFQTQTEVGKNMIRRLTSFIK</sequence>
<organism>
    <name type="scientific">Catharanthus roseus</name>
    <name type="common">Madagascar periwinkle</name>
    <name type="synonym">Vinca rosea</name>
    <dbReference type="NCBI Taxonomy" id="4058"/>
    <lineage>
        <taxon>Eukaryota</taxon>
        <taxon>Viridiplantae</taxon>
        <taxon>Streptophyta</taxon>
        <taxon>Embryophyta</taxon>
        <taxon>Tracheophyta</taxon>
        <taxon>Spermatophyta</taxon>
        <taxon>Magnoliopsida</taxon>
        <taxon>eudicotyledons</taxon>
        <taxon>Gunneridae</taxon>
        <taxon>Pentapetalae</taxon>
        <taxon>asterids</taxon>
        <taxon>lamiids</taxon>
        <taxon>Gentianales</taxon>
        <taxon>Apocynaceae</taxon>
        <taxon>Rauvolfioideae</taxon>
        <taxon>Vinceae</taxon>
        <taxon>Catharanthinae</taxon>
        <taxon>Catharanthus</taxon>
    </lineage>
</organism>
<accession>A0A2P1GIY2</accession>
<protein>
    <recommendedName>
        <fullName evidence="3">Hydrolase 3</fullName>
        <shortName evidence="3">CrHL3</shortName>
        <ecNumber evidence="2">4.-.-.-</ecNumber>
    </recommendedName>
</protein>
<dbReference type="EC" id="4.-.-.-" evidence="2"/>
<dbReference type="EMBL" id="MF770514">
    <property type="protein sequence ID" value="AVM85922.1"/>
    <property type="molecule type" value="mRNA"/>
</dbReference>
<dbReference type="SMR" id="A0A2P1GIY2"/>
<dbReference type="ESTHER" id="catro-hl3">
    <property type="family name" value="Plant_carboxylesterase"/>
</dbReference>
<dbReference type="GO" id="GO:0016787">
    <property type="term" value="F:hydrolase activity"/>
    <property type="evidence" value="ECO:0007669"/>
    <property type="project" value="InterPro"/>
</dbReference>
<dbReference type="GO" id="GO:0016829">
    <property type="term" value="F:lyase activity"/>
    <property type="evidence" value="ECO:0007669"/>
    <property type="project" value="UniProtKB-KW"/>
</dbReference>
<dbReference type="GO" id="GO:0009820">
    <property type="term" value="P:alkaloid metabolic process"/>
    <property type="evidence" value="ECO:0007669"/>
    <property type="project" value="UniProtKB-KW"/>
</dbReference>
<dbReference type="Gene3D" id="3.40.50.1820">
    <property type="entry name" value="alpha/beta hydrolase"/>
    <property type="match status" value="1"/>
</dbReference>
<dbReference type="InterPro" id="IPR013094">
    <property type="entry name" value="AB_hydrolase_3"/>
</dbReference>
<dbReference type="InterPro" id="IPR029058">
    <property type="entry name" value="AB_hydrolase_fold"/>
</dbReference>
<dbReference type="InterPro" id="IPR050466">
    <property type="entry name" value="Carboxylest/Gibb_receptor"/>
</dbReference>
<dbReference type="PANTHER" id="PTHR23024:SF551">
    <property type="entry name" value="2-HYDROXYISOFLAVANONE DEHYDRATASE-LIKE"/>
    <property type="match status" value="1"/>
</dbReference>
<dbReference type="PANTHER" id="PTHR23024">
    <property type="entry name" value="ARYLACETAMIDE DEACETYLASE"/>
    <property type="match status" value="1"/>
</dbReference>
<dbReference type="Pfam" id="PF07859">
    <property type="entry name" value="Abhydrolase_3"/>
    <property type="match status" value="1"/>
</dbReference>
<dbReference type="SUPFAM" id="SSF53474">
    <property type="entry name" value="alpha/beta-Hydrolases"/>
    <property type="match status" value="1"/>
</dbReference>
<keyword id="KW-0017">Alkaloid metabolism</keyword>
<keyword id="KW-0456">Lyase</keyword>
<reference key="1">
    <citation type="journal article" date="2018" name="Proc. Natl. Acad. Sci. U.S.A.">
        <title>Solution of the multistep pathway for assembly of corynanthean, strychnos, iboga, and aspidosperma monoterpenoid indole alkaloids from 19E-geissoschizine.</title>
        <authorList>
            <person name="Qu Y."/>
            <person name="Easson M.E.A.M."/>
            <person name="Simionescu R."/>
            <person name="Hajicek J."/>
            <person name="Thamm A.M.K."/>
            <person name="Salim V."/>
            <person name="De Luca V."/>
        </authorList>
    </citation>
    <scope>NUCLEOTIDE SEQUENCE [MRNA]</scope>
</reference>
<reference key="2">
    <citation type="journal article" date="2019" name="Plant J.">
        <title>Completion of the canonical pathway for assembly of anticancer drugs vincristine/vinblastine in Catharanthus roseus.</title>
        <authorList>
            <person name="Qu Y."/>
            <person name="Safonova O."/>
            <person name="De Luca V."/>
        </authorList>
    </citation>
    <scope>FUNCTION</scope>
    <scope>CATALYTIC ACTIVITY</scope>
    <scope>PATHWAY</scope>
    <source>
        <strain>cv. Little Delicata</strain>
    </source>
</reference>
<name>HL3_CATRO</name>
<evidence type="ECO:0000250" key="1">
    <source>
        <dbReference type="UniProtKB" id="Q5NUF3"/>
    </source>
</evidence>
<evidence type="ECO:0000269" key="2">
    <source>
    </source>
</evidence>
<evidence type="ECO:0000303" key="3">
    <source>
    </source>
</evidence>
<evidence type="ECO:0000305" key="4"/>
<comment type="function">
    <text evidence="2">Component of the seco-iridoid and derivatives monoterpenoid indole alkaloids (MIAs, e.g. vincadifformine) biosynthesis pathway. Catalyzes the conversion of O-acetylstemmadenine (OAS) to vincadifformine. May also trigger the formation of additional unknown MIAs.</text>
</comment>
<comment type="catalytic activity">
    <reaction evidence="2">
        <text>dihydroprecondylocarpine acetate + NADPH = (+)-vincadifformine + acetate + NADP(+)</text>
        <dbReference type="Rhea" id="RHEA:58588"/>
        <dbReference type="ChEBI" id="CHEBI:30089"/>
        <dbReference type="ChEBI" id="CHEBI:57783"/>
        <dbReference type="ChEBI" id="CHEBI:58349"/>
        <dbReference type="ChEBI" id="CHEBI:142770"/>
        <dbReference type="ChEBI" id="CHEBI:142830"/>
    </reaction>
    <physiologicalReaction direction="left-to-right" evidence="2">
        <dbReference type="Rhea" id="RHEA:58589"/>
    </physiologicalReaction>
</comment>
<comment type="pathway">
    <text evidence="2">Alkaloid biosynthesis.</text>
</comment>
<comment type="similarity">
    <text evidence="4">Belongs to the 'GDXG' lipolytic enzyme family.</text>
</comment>
<gene>
    <name evidence="3" type="primary">HL3</name>
</gene>
<feature type="chain" id="PRO_0000446424" description="Hydrolase 3">
    <location>
        <begin position="1"/>
        <end position="321"/>
    </location>
</feature>
<feature type="short sequence motif" description="Involved in the stabilization of the negatively charged intermediate by the formation of the oxyanion hole" evidence="1">
    <location>
        <begin position="80"/>
        <end position="82"/>
    </location>
</feature>
<feature type="active site" evidence="1">
    <location>
        <position position="172"/>
    </location>
</feature>
<feature type="active site" evidence="1">
    <location>
        <position position="267"/>
    </location>
</feature>